<name>AL1A2_MOUSE</name>
<protein>
    <recommendedName>
        <fullName>Retinal dehydrogenase 2</fullName>
        <shortName evidence="9 11">RALDH 2</shortName>
        <shortName evidence="11">RalDH2</shortName>
        <ecNumber evidence="6 7">1.2.1.36</ecNumber>
    </recommendedName>
    <alternativeName>
        <fullName>Aldehyde dehydrogenase family 1 member A2</fullName>
        <shortName evidence="10">ALDH1A2</shortName>
    </alternativeName>
    <alternativeName>
        <fullName>Retinaldehyde-specific dehydrogenase type 2</fullName>
        <shortName>RALDH(II)</shortName>
    </alternativeName>
</protein>
<feature type="chain" id="PRO_0000056423" description="Retinal dehydrogenase 2">
    <location>
        <begin position="1"/>
        <end position="518"/>
    </location>
</feature>
<feature type="active site" description="Proton acceptor" evidence="4 5">
    <location>
        <position position="286"/>
    </location>
</feature>
<feature type="active site" description="Nucleophile" evidence="4 5">
    <location>
        <position position="320"/>
    </location>
</feature>
<feature type="binding site" evidence="2">
    <location>
        <begin position="184"/>
        <end position="186"/>
    </location>
    <ligand>
        <name>NAD(+)</name>
        <dbReference type="ChEBI" id="CHEBI:57540"/>
    </ligand>
</feature>
<feature type="binding site" evidence="2">
    <location>
        <begin position="210"/>
        <end position="213"/>
    </location>
    <ligand>
        <name>NAD(+)</name>
        <dbReference type="ChEBI" id="CHEBI:57540"/>
    </ligand>
</feature>
<feature type="binding site" evidence="2">
    <location>
        <begin position="264"/>
        <end position="266"/>
    </location>
    <ligand>
        <name>NAD(+)</name>
        <dbReference type="ChEBI" id="CHEBI:57540"/>
    </ligand>
</feature>
<feature type="binding site" evidence="2">
    <location>
        <begin position="366"/>
        <end position="370"/>
    </location>
    <ligand>
        <name>NAD(+)</name>
        <dbReference type="ChEBI" id="CHEBI:57540"/>
    </ligand>
</feature>
<feature type="binding site" evidence="2">
    <location>
        <position position="417"/>
    </location>
    <ligand>
        <name>NAD(+)</name>
        <dbReference type="ChEBI" id="CHEBI:57540"/>
    </ligand>
</feature>
<feature type="site" description="Transition state stabilizer" evidence="1">
    <location>
        <position position="187"/>
    </location>
</feature>
<feature type="modified residue" description="Phosphotyrosine" evidence="2">
    <location>
        <position position="168"/>
    </location>
</feature>
<feature type="modified residue" description="Phosphoserine" evidence="2">
    <location>
        <position position="351"/>
    </location>
</feature>
<dbReference type="EC" id="1.2.1.36" evidence="6 7"/>
<dbReference type="EMBL" id="X99273">
    <property type="protein sequence ID" value="CAA67666.1"/>
    <property type="status" value="ALT_INIT"/>
    <property type="molecule type" value="mRNA"/>
</dbReference>
<dbReference type="EMBL" id="BC075704">
    <property type="protein sequence ID" value="AAH75704.1"/>
    <property type="molecule type" value="mRNA"/>
</dbReference>
<dbReference type="EMBL" id="AK078553">
    <property type="protein sequence ID" value="BAC37332.1"/>
    <property type="status" value="ALT_INIT"/>
    <property type="molecule type" value="mRNA"/>
</dbReference>
<dbReference type="CCDS" id="CCDS52852.1"/>
<dbReference type="PIR" id="S74224">
    <property type="entry name" value="S74224"/>
</dbReference>
<dbReference type="RefSeq" id="NP_033048.2">
    <property type="nucleotide sequence ID" value="NM_009022.4"/>
</dbReference>
<dbReference type="SMR" id="Q62148"/>
<dbReference type="BioGRID" id="202578">
    <property type="interactions" value="1"/>
</dbReference>
<dbReference type="FunCoup" id="Q62148">
    <property type="interactions" value="739"/>
</dbReference>
<dbReference type="STRING" id="10090.ENSMUSP00000034723"/>
<dbReference type="BindingDB" id="Q62148"/>
<dbReference type="GlyGen" id="Q62148">
    <property type="glycosylation" value="3 sites, 1 N-linked glycan (1 site)"/>
</dbReference>
<dbReference type="iPTMnet" id="Q62148"/>
<dbReference type="PhosphoSitePlus" id="Q62148"/>
<dbReference type="SwissPalm" id="Q62148"/>
<dbReference type="REPRODUCTION-2DPAGE" id="IPI00122212"/>
<dbReference type="REPRODUCTION-2DPAGE" id="Q62148"/>
<dbReference type="jPOST" id="Q62148"/>
<dbReference type="PaxDb" id="10090-ENSMUSP00000034723"/>
<dbReference type="PeptideAtlas" id="Q62148"/>
<dbReference type="ProteomicsDB" id="285805"/>
<dbReference type="Antibodypedia" id="2127">
    <property type="antibodies" value="343 antibodies from 33 providers"/>
</dbReference>
<dbReference type="DNASU" id="19378"/>
<dbReference type="Ensembl" id="ENSMUST00000034723.6">
    <property type="protein sequence ID" value="ENSMUSP00000034723.6"/>
    <property type="gene ID" value="ENSMUSG00000013584.6"/>
</dbReference>
<dbReference type="GeneID" id="19378"/>
<dbReference type="KEGG" id="mmu:19378"/>
<dbReference type="UCSC" id="uc009qox.2">
    <property type="organism name" value="mouse"/>
</dbReference>
<dbReference type="AGR" id="MGI:107928"/>
<dbReference type="CTD" id="8854"/>
<dbReference type="MGI" id="MGI:107928">
    <property type="gene designation" value="Aldh1a2"/>
</dbReference>
<dbReference type="VEuPathDB" id="HostDB:ENSMUSG00000013584"/>
<dbReference type="eggNOG" id="KOG2450">
    <property type="taxonomic scope" value="Eukaryota"/>
</dbReference>
<dbReference type="GeneTree" id="ENSGT00940000158898"/>
<dbReference type="HOGENOM" id="CLU_005391_0_1_1"/>
<dbReference type="InParanoid" id="Q62148"/>
<dbReference type="OMA" id="WSNTFNK"/>
<dbReference type="OrthoDB" id="310895at2759"/>
<dbReference type="PhylomeDB" id="Q62148"/>
<dbReference type="TreeFam" id="TF300455"/>
<dbReference type="BRENDA" id="1.2.1.36">
    <property type="organism ID" value="3474"/>
</dbReference>
<dbReference type="Reactome" id="R-MMU-5365859">
    <property type="pathway name" value="RA biosynthesis pathway"/>
</dbReference>
<dbReference type="UniPathway" id="UPA00912"/>
<dbReference type="BioGRID-ORCS" id="19378">
    <property type="hits" value="4 hits in 79 CRISPR screens"/>
</dbReference>
<dbReference type="ChiTaRS" id="Aldh1a2">
    <property type="organism name" value="mouse"/>
</dbReference>
<dbReference type="PRO" id="PR:Q62148"/>
<dbReference type="Proteomes" id="UP000000589">
    <property type="component" value="Chromosome 9"/>
</dbReference>
<dbReference type="RNAct" id="Q62148">
    <property type="molecule type" value="protein"/>
</dbReference>
<dbReference type="Bgee" id="ENSMUSG00000013584">
    <property type="expression patterns" value="Expressed in associated mesenchyme of midgut and 286 other cell types or tissues"/>
</dbReference>
<dbReference type="GO" id="GO:0048471">
    <property type="term" value="C:perinuclear region of cytoplasm"/>
    <property type="evidence" value="ECO:0007669"/>
    <property type="project" value="Ensembl"/>
</dbReference>
<dbReference type="GO" id="GO:0004028">
    <property type="term" value="F:3-chloroallyl aldehyde dehydrogenase activity"/>
    <property type="evidence" value="ECO:0000314"/>
    <property type="project" value="MGI"/>
</dbReference>
<dbReference type="GO" id="GO:0016918">
    <property type="term" value="F:retinal binding"/>
    <property type="evidence" value="ECO:0007669"/>
    <property type="project" value="Ensembl"/>
</dbReference>
<dbReference type="GO" id="GO:0001758">
    <property type="term" value="F:retinal dehydrogenase activity"/>
    <property type="evidence" value="ECO:0000314"/>
    <property type="project" value="MGI"/>
</dbReference>
<dbReference type="GO" id="GO:0042904">
    <property type="term" value="P:9-cis-retinoic acid biosynthetic process"/>
    <property type="evidence" value="ECO:0000314"/>
    <property type="project" value="MGI"/>
</dbReference>
<dbReference type="GO" id="GO:0009952">
    <property type="term" value="P:anterior/posterior pattern specification"/>
    <property type="evidence" value="ECO:0000315"/>
    <property type="project" value="MGI"/>
</dbReference>
<dbReference type="GO" id="GO:0001568">
    <property type="term" value="P:blood vessel development"/>
    <property type="evidence" value="ECO:0000315"/>
    <property type="project" value="MGI"/>
</dbReference>
<dbReference type="GO" id="GO:0043010">
    <property type="term" value="P:camera-type eye development"/>
    <property type="evidence" value="ECO:0000315"/>
    <property type="project" value="MGI"/>
</dbReference>
<dbReference type="GO" id="GO:0048738">
    <property type="term" value="P:cardiac muscle tissue development"/>
    <property type="evidence" value="ECO:0000315"/>
    <property type="project" value="MGI"/>
</dbReference>
<dbReference type="GO" id="GO:0008283">
    <property type="term" value="P:cell population proliferation"/>
    <property type="evidence" value="ECO:0000315"/>
    <property type="project" value="MGI"/>
</dbReference>
<dbReference type="GO" id="GO:0071300">
    <property type="term" value="P:cellular response to retinoic acid"/>
    <property type="evidence" value="ECO:0000270"/>
    <property type="project" value="UniProtKB"/>
</dbReference>
<dbReference type="GO" id="GO:0009855">
    <property type="term" value="P:determination of bilateral symmetry"/>
    <property type="evidence" value="ECO:0000315"/>
    <property type="project" value="MGI"/>
</dbReference>
<dbReference type="GO" id="GO:0031076">
    <property type="term" value="P:embryonic camera-type eye development"/>
    <property type="evidence" value="ECO:0000316"/>
    <property type="project" value="MGI"/>
</dbReference>
<dbReference type="GO" id="GO:0048566">
    <property type="term" value="P:embryonic digestive tract development"/>
    <property type="evidence" value="ECO:0000315"/>
    <property type="project" value="MGI"/>
</dbReference>
<dbReference type="GO" id="GO:0035115">
    <property type="term" value="P:embryonic forelimb morphogenesis"/>
    <property type="evidence" value="ECO:0000315"/>
    <property type="project" value="MGI"/>
</dbReference>
<dbReference type="GO" id="GO:0030326">
    <property type="term" value="P:embryonic limb morphogenesis"/>
    <property type="evidence" value="ECO:0000315"/>
    <property type="project" value="MGI"/>
</dbReference>
<dbReference type="GO" id="GO:0060324">
    <property type="term" value="P:face development"/>
    <property type="evidence" value="ECO:0000315"/>
    <property type="project" value="MGI"/>
</dbReference>
<dbReference type="GO" id="GO:0030900">
    <property type="term" value="P:forebrain development"/>
    <property type="evidence" value="ECO:0000315"/>
    <property type="project" value="MGI"/>
</dbReference>
<dbReference type="GO" id="GO:0007507">
    <property type="term" value="P:heart development"/>
    <property type="evidence" value="ECO:0000304"/>
    <property type="project" value="DFLAT"/>
</dbReference>
<dbReference type="GO" id="GO:0001947">
    <property type="term" value="P:heart looping"/>
    <property type="evidence" value="ECO:0000304"/>
    <property type="project" value="DFLAT"/>
</dbReference>
<dbReference type="GO" id="GO:0003007">
    <property type="term" value="P:heart morphogenesis"/>
    <property type="evidence" value="ECO:0000315"/>
    <property type="project" value="MGI"/>
</dbReference>
<dbReference type="GO" id="GO:0030902">
    <property type="term" value="P:hindbrain development"/>
    <property type="evidence" value="ECO:0000315"/>
    <property type="project" value="MGI"/>
</dbReference>
<dbReference type="GO" id="GO:0001822">
    <property type="term" value="P:kidney development"/>
    <property type="evidence" value="ECO:0007669"/>
    <property type="project" value="Ensembl"/>
</dbReference>
<dbReference type="GO" id="GO:0001889">
    <property type="term" value="P:liver development"/>
    <property type="evidence" value="ECO:0007669"/>
    <property type="project" value="Ensembl"/>
</dbReference>
<dbReference type="GO" id="GO:0030324">
    <property type="term" value="P:lung development"/>
    <property type="evidence" value="ECO:0000315"/>
    <property type="project" value="MGI"/>
</dbReference>
<dbReference type="GO" id="GO:0007494">
    <property type="term" value="P:midgut development"/>
    <property type="evidence" value="ECO:0007669"/>
    <property type="project" value="Ensembl"/>
</dbReference>
<dbReference type="GO" id="GO:0016331">
    <property type="term" value="P:morphogenesis of embryonic epithelium"/>
    <property type="evidence" value="ECO:0000315"/>
    <property type="project" value="MGI"/>
</dbReference>
<dbReference type="GO" id="GO:0008285">
    <property type="term" value="P:negative regulation of cell population proliferation"/>
    <property type="evidence" value="ECO:0007669"/>
    <property type="project" value="Ensembl"/>
</dbReference>
<dbReference type="GO" id="GO:0014032">
    <property type="term" value="P:neural crest cell development"/>
    <property type="evidence" value="ECO:0000315"/>
    <property type="project" value="MGI"/>
</dbReference>
<dbReference type="GO" id="GO:0021915">
    <property type="term" value="P:neural tube development"/>
    <property type="evidence" value="ECO:0007669"/>
    <property type="project" value="Ensembl"/>
</dbReference>
<dbReference type="GO" id="GO:0030182">
    <property type="term" value="P:neuron differentiation"/>
    <property type="evidence" value="ECO:0000315"/>
    <property type="project" value="MGI"/>
</dbReference>
<dbReference type="GO" id="GO:0031016">
    <property type="term" value="P:pancreas development"/>
    <property type="evidence" value="ECO:0000315"/>
    <property type="project" value="MGI"/>
</dbReference>
<dbReference type="GO" id="GO:0021983">
    <property type="term" value="P:pituitary gland development"/>
    <property type="evidence" value="ECO:0007669"/>
    <property type="project" value="Ensembl"/>
</dbReference>
<dbReference type="GO" id="GO:0043065">
    <property type="term" value="P:positive regulation of apoptotic process"/>
    <property type="evidence" value="ECO:0000315"/>
    <property type="project" value="MGI"/>
</dbReference>
<dbReference type="GO" id="GO:0008284">
    <property type="term" value="P:positive regulation of cell population proliferation"/>
    <property type="evidence" value="ECO:0000315"/>
    <property type="project" value="MGI"/>
</dbReference>
<dbReference type="GO" id="GO:0010628">
    <property type="term" value="P:positive regulation of gene expression"/>
    <property type="evidence" value="ECO:0000315"/>
    <property type="project" value="MGI"/>
</dbReference>
<dbReference type="GO" id="GO:0051289">
    <property type="term" value="P:protein homotetramerization"/>
    <property type="evidence" value="ECO:0000250"/>
    <property type="project" value="UniProtKB"/>
</dbReference>
<dbReference type="GO" id="GO:0009954">
    <property type="term" value="P:proximal/distal pattern formation"/>
    <property type="evidence" value="ECO:0000315"/>
    <property type="project" value="MGI"/>
</dbReference>
<dbReference type="GO" id="GO:1905562">
    <property type="term" value="P:regulation of vascular endothelial cell proliferation"/>
    <property type="evidence" value="ECO:0000315"/>
    <property type="project" value="MGI"/>
</dbReference>
<dbReference type="GO" id="GO:0034097">
    <property type="term" value="P:response to cytokine"/>
    <property type="evidence" value="ECO:0007669"/>
    <property type="project" value="Ensembl"/>
</dbReference>
<dbReference type="GO" id="GO:0032355">
    <property type="term" value="P:response to estradiol"/>
    <property type="evidence" value="ECO:0007669"/>
    <property type="project" value="Ensembl"/>
</dbReference>
<dbReference type="GO" id="GO:0032526">
    <property type="term" value="P:response to retinoic acid"/>
    <property type="evidence" value="ECO:0000250"/>
    <property type="project" value="UniProtKB"/>
</dbReference>
<dbReference type="GO" id="GO:0033189">
    <property type="term" value="P:response to vitamin A"/>
    <property type="evidence" value="ECO:0007669"/>
    <property type="project" value="Ensembl"/>
</dbReference>
<dbReference type="GO" id="GO:0042574">
    <property type="term" value="P:retinal metabolic process"/>
    <property type="evidence" value="ECO:0000314"/>
    <property type="project" value="MGI"/>
</dbReference>
<dbReference type="GO" id="GO:0042573">
    <property type="term" value="P:retinoic acid metabolic process"/>
    <property type="evidence" value="ECO:0000314"/>
    <property type="project" value="MGI"/>
</dbReference>
<dbReference type="GO" id="GO:0048384">
    <property type="term" value="P:retinoic acid receptor signaling pathway"/>
    <property type="evidence" value="ECO:0000315"/>
    <property type="project" value="MGI"/>
</dbReference>
<dbReference type="GO" id="GO:0001523">
    <property type="term" value="P:retinoid metabolic process"/>
    <property type="evidence" value="ECO:0000304"/>
    <property type="project" value="DFLAT"/>
</dbReference>
<dbReference type="GO" id="GO:0042572">
    <property type="term" value="P:retinol metabolic process"/>
    <property type="evidence" value="ECO:0007669"/>
    <property type="project" value="UniProtKB-UniPathway"/>
</dbReference>
<dbReference type="GO" id="GO:0035799">
    <property type="term" value="P:ureter maturation"/>
    <property type="evidence" value="ECO:0000315"/>
    <property type="project" value="MGI"/>
</dbReference>
<dbReference type="CDD" id="cd07141">
    <property type="entry name" value="ALDH_F1AB_F2_RALDH1"/>
    <property type="match status" value="1"/>
</dbReference>
<dbReference type="FunFam" id="3.40.605.10:FF:000050">
    <property type="entry name" value="Aldehyde dehydrogenase, mitochondrial"/>
    <property type="match status" value="1"/>
</dbReference>
<dbReference type="FunFam" id="3.40.309.10:FF:000001">
    <property type="entry name" value="Mitochondrial aldehyde dehydrogenase 2"/>
    <property type="match status" value="1"/>
</dbReference>
<dbReference type="Gene3D" id="3.40.605.10">
    <property type="entry name" value="Aldehyde Dehydrogenase, Chain A, domain 1"/>
    <property type="match status" value="1"/>
</dbReference>
<dbReference type="Gene3D" id="3.40.309.10">
    <property type="entry name" value="Aldehyde Dehydrogenase, Chain A, domain 2"/>
    <property type="match status" value="1"/>
</dbReference>
<dbReference type="InterPro" id="IPR016161">
    <property type="entry name" value="Ald_DH/histidinol_DH"/>
</dbReference>
<dbReference type="InterPro" id="IPR016163">
    <property type="entry name" value="Ald_DH_C"/>
</dbReference>
<dbReference type="InterPro" id="IPR016160">
    <property type="entry name" value="Ald_DH_CS_CYS"/>
</dbReference>
<dbReference type="InterPro" id="IPR029510">
    <property type="entry name" value="Ald_DH_CS_GLU"/>
</dbReference>
<dbReference type="InterPro" id="IPR016162">
    <property type="entry name" value="Ald_DH_N"/>
</dbReference>
<dbReference type="InterPro" id="IPR015590">
    <property type="entry name" value="Aldehyde_DH_dom"/>
</dbReference>
<dbReference type="PANTHER" id="PTHR11699">
    <property type="entry name" value="ALDEHYDE DEHYDROGENASE-RELATED"/>
    <property type="match status" value="1"/>
</dbReference>
<dbReference type="Pfam" id="PF00171">
    <property type="entry name" value="Aldedh"/>
    <property type="match status" value="1"/>
</dbReference>
<dbReference type="SUPFAM" id="SSF53720">
    <property type="entry name" value="ALDH-like"/>
    <property type="match status" value="1"/>
</dbReference>
<dbReference type="PROSITE" id="PS00070">
    <property type="entry name" value="ALDEHYDE_DEHYDR_CYS"/>
    <property type="match status" value="1"/>
</dbReference>
<dbReference type="PROSITE" id="PS00687">
    <property type="entry name" value="ALDEHYDE_DEHYDR_GLU"/>
    <property type="match status" value="1"/>
</dbReference>
<proteinExistence type="evidence at protein level"/>
<reference key="1">
    <citation type="journal article" date="1996" name="Eur. J. Biochem.">
        <title>Molecular identification of a major retinoic-acid-synthesizing enzyme, a retinaldehyde-specific dehydrogenase.</title>
        <authorList>
            <person name="Zhao D."/>
            <person name="McCaffery P."/>
            <person name="Ivins K.J."/>
            <person name="Neve R.L."/>
            <person name="Hogan P."/>
            <person name="Chin W.W."/>
            <person name="Draeger U.C."/>
        </authorList>
    </citation>
    <scope>NUCLEOTIDE SEQUENCE [MRNA]</scope>
    <scope>FUNCTION</scope>
    <scope>CATALYTIC ACTIVITY</scope>
    <scope>PATHWAY</scope>
    <source>
        <strain>C3H/He</strain>
    </source>
</reference>
<reference key="2">
    <citation type="journal article" date="2004" name="Genome Res.">
        <title>The status, quality, and expansion of the NIH full-length cDNA project: the Mammalian Gene Collection (MGC).</title>
        <authorList>
            <consortium name="The MGC Project Team"/>
        </authorList>
    </citation>
    <scope>NUCLEOTIDE SEQUENCE [LARGE SCALE MRNA]</scope>
    <source>
        <strain>C57BL/6J</strain>
        <tissue>Kidney</tissue>
    </source>
</reference>
<reference key="3">
    <citation type="journal article" date="2005" name="Science">
        <title>The transcriptional landscape of the mammalian genome.</title>
        <authorList>
            <person name="Carninci P."/>
            <person name="Kasukawa T."/>
            <person name="Katayama S."/>
            <person name="Gough J."/>
            <person name="Frith M.C."/>
            <person name="Maeda N."/>
            <person name="Oyama R."/>
            <person name="Ravasi T."/>
            <person name="Lenhard B."/>
            <person name="Wells C."/>
            <person name="Kodzius R."/>
            <person name="Shimokawa K."/>
            <person name="Bajic V.B."/>
            <person name="Brenner S.E."/>
            <person name="Batalov S."/>
            <person name="Forrest A.R."/>
            <person name="Zavolan M."/>
            <person name="Davis M.J."/>
            <person name="Wilming L.G."/>
            <person name="Aidinis V."/>
            <person name="Allen J.E."/>
            <person name="Ambesi-Impiombato A."/>
            <person name="Apweiler R."/>
            <person name="Aturaliya R.N."/>
            <person name="Bailey T.L."/>
            <person name="Bansal M."/>
            <person name="Baxter L."/>
            <person name="Beisel K.W."/>
            <person name="Bersano T."/>
            <person name="Bono H."/>
            <person name="Chalk A.M."/>
            <person name="Chiu K.P."/>
            <person name="Choudhary V."/>
            <person name="Christoffels A."/>
            <person name="Clutterbuck D.R."/>
            <person name="Crowe M.L."/>
            <person name="Dalla E."/>
            <person name="Dalrymple B.P."/>
            <person name="de Bono B."/>
            <person name="Della Gatta G."/>
            <person name="di Bernardo D."/>
            <person name="Down T."/>
            <person name="Engstrom P."/>
            <person name="Fagiolini M."/>
            <person name="Faulkner G."/>
            <person name="Fletcher C.F."/>
            <person name="Fukushima T."/>
            <person name="Furuno M."/>
            <person name="Futaki S."/>
            <person name="Gariboldi M."/>
            <person name="Georgii-Hemming P."/>
            <person name="Gingeras T.R."/>
            <person name="Gojobori T."/>
            <person name="Green R.E."/>
            <person name="Gustincich S."/>
            <person name="Harbers M."/>
            <person name="Hayashi Y."/>
            <person name="Hensch T.K."/>
            <person name="Hirokawa N."/>
            <person name="Hill D."/>
            <person name="Huminiecki L."/>
            <person name="Iacono M."/>
            <person name="Ikeo K."/>
            <person name="Iwama A."/>
            <person name="Ishikawa T."/>
            <person name="Jakt M."/>
            <person name="Kanapin A."/>
            <person name="Katoh M."/>
            <person name="Kawasawa Y."/>
            <person name="Kelso J."/>
            <person name="Kitamura H."/>
            <person name="Kitano H."/>
            <person name="Kollias G."/>
            <person name="Krishnan S.P."/>
            <person name="Kruger A."/>
            <person name="Kummerfeld S.K."/>
            <person name="Kurochkin I.V."/>
            <person name="Lareau L.F."/>
            <person name="Lazarevic D."/>
            <person name="Lipovich L."/>
            <person name="Liu J."/>
            <person name="Liuni S."/>
            <person name="McWilliam S."/>
            <person name="Madan Babu M."/>
            <person name="Madera M."/>
            <person name="Marchionni L."/>
            <person name="Matsuda H."/>
            <person name="Matsuzawa S."/>
            <person name="Miki H."/>
            <person name="Mignone F."/>
            <person name="Miyake S."/>
            <person name="Morris K."/>
            <person name="Mottagui-Tabar S."/>
            <person name="Mulder N."/>
            <person name="Nakano N."/>
            <person name="Nakauchi H."/>
            <person name="Ng P."/>
            <person name="Nilsson R."/>
            <person name="Nishiguchi S."/>
            <person name="Nishikawa S."/>
            <person name="Nori F."/>
            <person name="Ohara O."/>
            <person name="Okazaki Y."/>
            <person name="Orlando V."/>
            <person name="Pang K.C."/>
            <person name="Pavan W.J."/>
            <person name="Pavesi G."/>
            <person name="Pesole G."/>
            <person name="Petrovsky N."/>
            <person name="Piazza S."/>
            <person name="Reed J."/>
            <person name="Reid J.F."/>
            <person name="Ring B.Z."/>
            <person name="Ringwald M."/>
            <person name="Rost B."/>
            <person name="Ruan Y."/>
            <person name="Salzberg S.L."/>
            <person name="Sandelin A."/>
            <person name="Schneider C."/>
            <person name="Schoenbach C."/>
            <person name="Sekiguchi K."/>
            <person name="Semple C.A."/>
            <person name="Seno S."/>
            <person name="Sessa L."/>
            <person name="Sheng Y."/>
            <person name="Shibata Y."/>
            <person name="Shimada H."/>
            <person name="Shimada K."/>
            <person name="Silva D."/>
            <person name="Sinclair B."/>
            <person name="Sperling S."/>
            <person name="Stupka E."/>
            <person name="Sugiura K."/>
            <person name="Sultana R."/>
            <person name="Takenaka Y."/>
            <person name="Taki K."/>
            <person name="Tammoja K."/>
            <person name="Tan S.L."/>
            <person name="Tang S."/>
            <person name="Taylor M.S."/>
            <person name="Tegner J."/>
            <person name="Teichmann S.A."/>
            <person name="Ueda H.R."/>
            <person name="van Nimwegen E."/>
            <person name="Verardo R."/>
            <person name="Wei C.L."/>
            <person name="Yagi K."/>
            <person name="Yamanishi H."/>
            <person name="Zabarovsky E."/>
            <person name="Zhu S."/>
            <person name="Zimmer A."/>
            <person name="Hide W."/>
            <person name="Bult C."/>
            <person name="Grimmond S.M."/>
            <person name="Teasdale R.D."/>
            <person name="Liu E.T."/>
            <person name="Brusic V."/>
            <person name="Quackenbush J."/>
            <person name="Wahlestedt C."/>
            <person name="Mattick J.S."/>
            <person name="Hume D.A."/>
            <person name="Kai C."/>
            <person name="Sasaki D."/>
            <person name="Tomaru Y."/>
            <person name="Fukuda S."/>
            <person name="Kanamori-Katayama M."/>
            <person name="Suzuki M."/>
            <person name="Aoki J."/>
            <person name="Arakawa T."/>
            <person name="Iida J."/>
            <person name="Imamura K."/>
            <person name="Itoh M."/>
            <person name="Kato T."/>
            <person name="Kawaji H."/>
            <person name="Kawagashira N."/>
            <person name="Kawashima T."/>
            <person name="Kojima M."/>
            <person name="Kondo S."/>
            <person name="Konno H."/>
            <person name="Nakano K."/>
            <person name="Ninomiya N."/>
            <person name="Nishio T."/>
            <person name="Okada M."/>
            <person name="Plessy C."/>
            <person name="Shibata K."/>
            <person name="Shiraki T."/>
            <person name="Suzuki S."/>
            <person name="Tagami M."/>
            <person name="Waki K."/>
            <person name="Watahiki A."/>
            <person name="Okamura-Oho Y."/>
            <person name="Suzuki H."/>
            <person name="Kawai J."/>
            <person name="Hayashizaki Y."/>
        </authorList>
    </citation>
    <scope>NUCLEOTIDE SEQUENCE [LARGE SCALE MRNA] OF 2-518</scope>
    <source>
        <strain>C57BL/6J</strain>
    </source>
</reference>
<reference key="4">
    <citation type="journal article" date="1997" name="Mech. Dev.">
        <title>Restricted expression and retinoic acid-induced downregulation of the retinaldehyde dehydrogenase type 2 (RALDH-2) gene during mouse development.</title>
        <authorList>
            <person name="Niederreither K."/>
            <person name="McCaffery P."/>
            <person name="Draeger U.C."/>
            <person name="Chambon P."/>
            <person name="Dolle P."/>
        </authorList>
    </citation>
    <scope>DEVELOPMENTAL STAGE</scope>
</reference>
<reference key="5">
    <citation type="journal article" date="2005" name="J. Biol. Chem.">
        <title>Metabolism and transactivation activity of 13,14-dihydroretinoic acid.</title>
        <authorList>
            <person name="Moise A.R."/>
            <person name="Kuksa V."/>
            <person name="Blaner W.S."/>
            <person name="Baehr W."/>
            <person name="Palczewski K."/>
        </authorList>
    </citation>
    <scope>FUNCTION</scope>
    <scope>CATALYTIC ACTIVITY</scope>
</reference>
<reference key="6">
    <citation type="journal article" date="2012" name="Biol. Reprod.">
        <title>Initiating meiosis: the case for retinoic acid.</title>
        <authorList>
            <person name="Griswold M.D."/>
            <person name="Hogarth C.A."/>
            <person name="Bowles J."/>
            <person name="Koopman P."/>
        </authorList>
    </citation>
    <scope>FUNCTION</scope>
</reference>
<reference key="7">
    <citation type="journal article" date="2010" name="Cell">
        <title>A tissue-specific atlas of mouse protein phosphorylation and expression.</title>
        <authorList>
            <person name="Huttlin E.L."/>
            <person name="Jedrychowski M.P."/>
            <person name="Elias J.E."/>
            <person name="Goswami T."/>
            <person name="Rad R."/>
            <person name="Beausoleil S.A."/>
            <person name="Villen J."/>
            <person name="Haas W."/>
            <person name="Sowa M.E."/>
            <person name="Gygi S.P."/>
        </authorList>
    </citation>
    <scope>IDENTIFICATION BY MASS SPECTROMETRY [LARGE SCALE ANALYSIS]</scope>
    <source>
        <tissue>Lung</tissue>
        <tissue>Testis</tissue>
    </source>
</reference>
<gene>
    <name type="primary">Aldh1a2</name>
    <name type="synonym">Aldh1a7</name>
    <name evidence="11" type="synonym">Raldh2</name>
</gene>
<keyword id="KW-0963">Cytoplasm</keyword>
<keyword id="KW-0443">Lipid metabolism</keyword>
<keyword id="KW-0520">NAD</keyword>
<keyword id="KW-0560">Oxidoreductase</keyword>
<keyword id="KW-0597">Phosphoprotein</keyword>
<keyword id="KW-1185">Reference proteome</keyword>
<sequence length="518" mass="56626">MTSSEIAMPGEVKADPAALMASLQLLPSPTPNLEIKYTKIFINNEWQNSESGRVFPVCNPATGEQVCEVQEADKVDIDKAVQAARLAFSLGSVWRRMDASERGRLLDKLADLVERDRATLATMESLNGGKPFLQAFYIDLQGVIKTLRYYAGWADKIHGMTIPVDGDYFTFTRHEPIGVCGQIIPWNFPLLMFTWKIAPALCCGNTVVIKPAEQTPLSALYMGALIKEAGFPPGVVNILPGYGPTAGAAIASHIGIDKIAFTGSTEVGKLIQEAAGRSNLKRVTLELGGKSPNIIFADADLDYAVEQAHQGVFFNQGQCCTAGSRIFVEESIYEEFVKRSVERAKRRIVGSPFDPTTEQGPQIDKKQYNKVLELIQSGVAEGAKLECGGKGLGRKGFFIEPTVFSNVTDDMRIAKEEIFGPVQEILRFKTMDEVIERANNSDFGLVAAVFTNDINKALMVSSAMQAGTVWINCYNALNAQSPFGGFKMSGNGREMGEFGLREYSEVKTVTVKIPQKNS</sequence>
<evidence type="ECO:0000250" key="1"/>
<evidence type="ECO:0000250" key="2">
    <source>
        <dbReference type="UniProtKB" id="O94788"/>
    </source>
</evidence>
<evidence type="ECO:0000250" key="3">
    <source>
        <dbReference type="UniProtKB" id="Q63639"/>
    </source>
</evidence>
<evidence type="ECO:0000255" key="4">
    <source>
        <dbReference type="PROSITE-ProRule" id="PRU10007"/>
    </source>
</evidence>
<evidence type="ECO:0000255" key="5">
    <source>
        <dbReference type="PROSITE-ProRule" id="PRU10008"/>
    </source>
</evidence>
<evidence type="ECO:0000269" key="6">
    <source>
    </source>
</evidence>
<evidence type="ECO:0000269" key="7">
    <source>
    </source>
</evidence>
<evidence type="ECO:0000269" key="8">
    <source>
    </source>
</evidence>
<evidence type="ECO:0000303" key="9">
    <source>
    </source>
</evidence>
<evidence type="ECO:0000303" key="10">
    <source>
    </source>
</evidence>
<evidence type="ECO:0000303" key="11">
    <source>
    </source>
</evidence>
<evidence type="ECO:0000305" key="12"/>
<evidence type="ECO:0000305" key="13">
    <source>
    </source>
</evidence>
<evidence type="ECO:0000305" key="14">
    <source>
    </source>
</evidence>
<organism>
    <name type="scientific">Mus musculus</name>
    <name type="common">Mouse</name>
    <dbReference type="NCBI Taxonomy" id="10090"/>
    <lineage>
        <taxon>Eukaryota</taxon>
        <taxon>Metazoa</taxon>
        <taxon>Chordata</taxon>
        <taxon>Craniata</taxon>
        <taxon>Vertebrata</taxon>
        <taxon>Euteleostomi</taxon>
        <taxon>Mammalia</taxon>
        <taxon>Eutheria</taxon>
        <taxon>Euarchontoglires</taxon>
        <taxon>Glires</taxon>
        <taxon>Rodentia</taxon>
        <taxon>Myomorpha</taxon>
        <taxon>Muroidea</taxon>
        <taxon>Muridae</taxon>
        <taxon>Murinae</taxon>
        <taxon>Mus</taxon>
        <taxon>Mus</taxon>
    </lineage>
</organism>
<comment type="function">
    <text evidence="3 6 7 13 14">Catalyzes the NAD-dependent oxidation of aldehyde substrates, such as all-trans-retinal and all-trans-13,14-dihydroretinal, to their corresponding carboxylic acids, all-trans-retinoate and all-trans-13,14-dihydroretinoate, respectively (PubMed:15911617, PubMed:8797830). Retinoate signaling is critical for the transcriptional control of many genes, for instance it is crucial for initiation of meiosis in both male and female (Probable). Recognizes retinal as substrate, both in its free form and when bound to cellular retinol-binding protein (By similarity). Lacks activity with benzaldehyde, acetaldehyde and octanal (PubMed:8797830). Displays complete lack of activity with citral (By similarity).</text>
</comment>
<comment type="catalytic activity">
    <reaction evidence="6 7">
        <text>retinal + NAD(+) + H2O = retinoate + NADH + 2 H(+)</text>
        <dbReference type="Rhea" id="RHEA:16177"/>
        <dbReference type="ChEBI" id="CHEBI:15035"/>
        <dbReference type="ChEBI" id="CHEBI:15036"/>
        <dbReference type="ChEBI" id="CHEBI:15377"/>
        <dbReference type="ChEBI" id="CHEBI:15378"/>
        <dbReference type="ChEBI" id="CHEBI:57540"/>
        <dbReference type="ChEBI" id="CHEBI:57945"/>
        <dbReference type="EC" id="1.2.1.36"/>
    </reaction>
    <physiologicalReaction direction="left-to-right" evidence="6 7">
        <dbReference type="Rhea" id="RHEA:16178"/>
    </physiologicalReaction>
</comment>
<comment type="catalytic activity">
    <reaction evidence="6">
        <text>all-trans-retinal + NAD(+) + H2O = all-trans-retinoate + NADH + 2 H(+)</text>
        <dbReference type="Rhea" id="RHEA:42080"/>
        <dbReference type="ChEBI" id="CHEBI:15377"/>
        <dbReference type="ChEBI" id="CHEBI:15378"/>
        <dbReference type="ChEBI" id="CHEBI:17898"/>
        <dbReference type="ChEBI" id="CHEBI:35291"/>
        <dbReference type="ChEBI" id="CHEBI:57540"/>
        <dbReference type="ChEBI" id="CHEBI:57945"/>
        <dbReference type="EC" id="1.2.1.36"/>
    </reaction>
    <physiologicalReaction direction="left-to-right" evidence="6">
        <dbReference type="Rhea" id="RHEA:42081"/>
    </physiologicalReaction>
</comment>
<comment type="catalytic activity">
    <reaction evidence="6">
        <text>all-trans-13,14-dihydroretinal + NAD(+) + H2O = all-trans-13,14-dihydroretinoate + NADH + 2 H(+)</text>
        <dbReference type="Rhea" id="RHEA:75119"/>
        <dbReference type="ChEBI" id="CHEBI:15377"/>
        <dbReference type="ChEBI" id="CHEBI:15378"/>
        <dbReference type="ChEBI" id="CHEBI:57540"/>
        <dbReference type="ChEBI" id="CHEBI:57945"/>
        <dbReference type="ChEBI" id="CHEBI:194182"/>
        <dbReference type="ChEBI" id="CHEBI:194183"/>
    </reaction>
    <physiologicalReaction direction="left-to-right" evidence="6">
        <dbReference type="Rhea" id="RHEA:75120"/>
    </physiologicalReaction>
</comment>
<comment type="pathway">
    <text evidence="6 7">Cofactor metabolism; retinol metabolism.</text>
</comment>
<comment type="subunit">
    <text evidence="2">Homotetramer.</text>
</comment>
<comment type="subcellular location">
    <subcellularLocation>
        <location>Cytoplasm</location>
    </subcellularLocation>
</comment>
<comment type="developmental stage">
    <text evidence="8">Expressed in the mesoderm adjacent to the node and primitive streak during early gastrulation (PubMed:9106168). At the headfold stage, mesodermal expression is restricted to posterior regions up to the base of the headfolds (PubMed:9106168). From 10.5 dpc onwards expressed within the spinal cord in cervical and lumbar regions adjacent to the developing limbs, as well as in specific regions of the developing head, including the tooth buds, inner ear, meninges and pituitary gland, and in several viscera (PubMed:9106168). Transiently expressed in the undifferentiated somites and the optic vesicles, and more persistently along the lateral walls of the intraembryonic coelom and around the hindgut diverticulum (PubMed:9106168).</text>
</comment>
<comment type="similarity">
    <text evidence="12">Belongs to the aldehyde dehydrogenase family.</text>
</comment>
<comment type="sequence caution" evidence="12">
    <conflict type="erroneous initiation">
        <sequence resource="EMBL-CDS" id="BAC37332"/>
    </conflict>
</comment>
<comment type="sequence caution" evidence="12">
    <conflict type="erroneous initiation">
        <sequence resource="EMBL-CDS" id="CAA67666"/>
    </conflict>
</comment>
<accession>Q62148</accession>
<accession>Q6DI79</accession>